<proteinExistence type="evidence at transcript level"/>
<keyword id="KW-0175">Coiled coil</keyword>
<keyword id="KW-0507">mRNA processing</keyword>
<keyword id="KW-0508">mRNA splicing</keyword>
<keyword id="KW-0539">Nucleus</keyword>
<keyword id="KW-1185">Reference proteome</keyword>
<keyword id="KW-0747">Spliceosome</keyword>
<evidence type="ECO:0000250" key="1"/>
<evidence type="ECO:0000250" key="2">
    <source>
        <dbReference type="UniProtKB" id="Q9CWV6"/>
    </source>
</evidence>
<evidence type="ECO:0000250" key="3">
    <source>
        <dbReference type="UniProtKB" id="Q9H875"/>
    </source>
</evidence>
<evidence type="ECO:0000255" key="4"/>
<evidence type="ECO:0000256" key="5">
    <source>
        <dbReference type="SAM" id="MobiDB-lite"/>
    </source>
</evidence>
<evidence type="ECO:0000305" key="6"/>
<accession>Q5R5J3</accession>
<comment type="function">
    <text evidence="2 3">Required for pre-mRNA splicing as component of the spliceosome (By similarity). Binds double-stranded RNA. Inhibits EIF2AK2 kinase activity (By similarity).</text>
</comment>
<comment type="subunit">
    <text evidence="2 3">Component of the pre-catalytic and post-catalytic spliceosome complexes (By similarity). Interacts with EIF2AK2 (By similarity).</text>
</comment>
<comment type="subcellular location">
    <subcellularLocation>
        <location evidence="3">Nucleus</location>
    </subcellularLocation>
    <subcellularLocation>
        <location evidence="2">Nucleus</location>
        <location evidence="2">Nucleolus</location>
    </subcellularLocation>
</comment>
<comment type="similarity">
    <text evidence="6">Belongs to the PRKRIP1 family.</text>
</comment>
<feature type="chain" id="PRO_0000324789" description="PRKR-interacting protein 1">
    <location>
        <begin position="1"/>
        <end position="184"/>
    </location>
</feature>
<feature type="region of interest" description="Interaction with EIF2AK2" evidence="1">
    <location>
        <begin position="1"/>
        <end position="50"/>
    </location>
</feature>
<feature type="region of interest" description="Disordered" evidence="5">
    <location>
        <begin position="1"/>
        <end position="20"/>
    </location>
</feature>
<feature type="region of interest" description="Disordered" evidence="5">
    <location>
        <begin position="37"/>
        <end position="76"/>
    </location>
</feature>
<feature type="region of interest" description="Required for RNA-binding" evidence="1">
    <location>
        <begin position="51"/>
        <end position="143"/>
    </location>
</feature>
<feature type="region of interest" description="Disordered" evidence="5">
    <location>
        <begin position="120"/>
        <end position="184"/>
    </location>
</feature>
<feature type="region of interest" description="Required for nuclear localization" evidence="1">
    <location>
        <begin position="126"/>
        <end position="138"/>
    </location>
</feature>
<feature type="coiled-coil region" evidence="4">
    <location>
        <begin position="91"/>
        <end position="152"/>
    </location>
</feature>
<feature type="compositionally biased region" description="Low complexity" evidence="5">
    <location>
        <begin position="1"/>
        <end position="10"/>
    </location>
</feature>
<feature type="compositionally biased region" description="Basic residues" evidence="5">
    <location>
        <begin position="126"/>
        <end position="143"/>
    </location>
</feature>
<feature type="compositionally biased region" description="Low complexity" evidence="5">
    <location>
        <begin position="159"/>
        <end position="169"/>
    </location>
</feature>
<dbReference type="EMBL" id="CR860865">
    <property type="protein sequence ID" value="CAH92973.1"/>
    <property type="molecule type" value="mRNA"/>
</dbReference>
<dbReference type="RefSeq" id="NP_001126756.1">
    <property type="nucleotide sequence ID" value="NM_001133284.1"/>
</dbReference>
<dbReference type="SMR" id="Q5R5J3"/>
<dbReference type="FunCoup" id="Q5R5J3">
    <property type="interactions" value="2447"/>
</dbReference>
<dbReference type="STRING" id="9601.ENSPPYP00000019568"/>
<dbReference type="Ensembl" id="ENSPPYT00000020339.3">
    <property type="protein sequence ID" value="ENSPPYP00000019568.2"/>
    <property type="gene ID" value="ENSPPYG00000017454.3"/>
</dbReference>
<dbReference type="GeneID" id="100173758"/>
<dbReference type="KEGG" id="pon:100173758"/>
<dbReference type="CTD" id="79706"/>
<dbReference type="eggNOG" id="KOG4055">
    <property type="taxonomic scope" value="Eukaryota"/>
</dbReference>
<dbReference type="GeneTree" id="ENSGT00390000005003"/>
<dbReference type="HOGENOM" id="CLU_079129_2_0_1"/>
<dbReference type="InParanoid" id="Q5R5J3"/>
<dbReference type="OMA" id="ETPSFIM"/>
<dbReference type="OrthoDB" id="10067079at2759"/>
<dbReference type="TreeFam" id="TF314382"/>
<dbReference type="Proteomes" id="UP000001595">
    <property type="component" value="Chromosome 7"/>
</dbReference>
<dbReference type="GO" id="GO:0005730">
    <property type="term" value="C:nucleolus"/>
    <property type="evidence" value="ECO:0000250"/>
    <property type="project" value="UniProtKB"/>
</dbReference>
<dbReference type="GO" id="GO:0005681">
    <property type="term" value="C:spliceosomal complex"/>
    <property type="evidence" value="ECO:0007669"/>
    <property type="project" value="UniProtKB-KW"/>
</dbReference>
<dbReference type="GO" id="GO:0003725">
    <property type="term" value="F:double-stranded RNA binding"/>
    <property type="evidence" value="ECO:0000250"/>
    <property type="project" value="UniProtKB"/>
</dbReference>
<dbReference type="GO" id="GO:0019901">
    <property type="term" value="F:protein kinase binding"/>
    <property type="evidence" value="ECO:0000250"/>
    <property type="project" value="UniProtKB"/>
</dbReference>
<dbReference type="GO" id="GO:0004860">
    <property type="term" value="F:protein kinase inhibitor activity"/>
    <property type="evidence" value="ECO:0000250"/>
    <property type="project" value="UniProtKB"/>
</dbReference>
<dbReference type="GO" id="GO:0006397">
    <property type="term" value="P:mRNA processing"/>
    <property type="evidence" value="ECO:0007669"/>
    <property type="project" value="UniProtKB-KW"/>
</dbReference>
<dbReference type="GO" id="GO:0008380">
    <property type="term" value="P:RNA splicing"/>
    <property type="evidence" value="ECO:0007669"/>
    <property type="project" value="UniProtKB-KW"/>
</dbReference>
<dbReference type="InterPro" id="IPR009548">
    <property type="entry name" value="Prkrip1"/>
</dbReference>
<dbReference type="PANTHER" id="PTHR13507">
    <property type="entry name" value="PRKR-INTERACTING PROTEIN 1"/>
    <property type="match status" value="1"/>
</dbReference>
<dbReference type="PANTHER" id="PTHR13507:SF0">
    <property type="entry name" value="PRKR-INTERACTING PROTEIN 1"/>
    <property type="match status" value="1"/>
</dbReference>
<dbReference type="Pfam" id="PF06658">
    <property type="entry name" value="DUF1168"/>
    <property type="match status" value="1"/>
</dbReference>
<gene>
    <name type="primary">PRKRIP1</name>
</gene>
<protein>
    <recommendedName>
        <fullName>PRKR-interacting protein 1</fullName>
    </recommendedName>
</protein>
<sequence length="184" mass="20997">MASPAASSVRPPRPKKEPQTLVIPKNAAEEQKLKLERLMKNPDKAVPIPEKMSEWAPRPPPEFVRDVMGSSAGAGSGEFHVYRHLRRREYQRQDYMDAMAEKQKLDAEFQKRLEKNKIAAEEQTAKRRKKRQKLKEKKLLAKKMKLEQKKQEGPGQPKEQGSSSSAEASGTEEEEEVPSFTMGR</sequence>
<reference key="1">
    <citation type="submission" date="2004-11" db="EMBL/GenBank/DDBJ databases">
        <authorList>
            <consortium name="The German cDNA consortium"/>
        </authorList>
    </citation>
    <scope>NUCLEOTIDE SEQUENCE [LARGE SCALE MRNA]</scope>
    <source>
        <tissue>Kidney</tissue>
    </source>
</reference>
<name>PKRI1_PONAB</name>
<organism>
    <name type="scientific">Pongo abelii</name>
    <name type="common">Sumatran orangutan</name>
    <name type="synonym">Pongo pygmaeus abelii</name>
    <dbReference type="NCBI Taxonomy" id="9601"/>
    <lineage>
        <taxon>Eukaryota</taxon>
        <taxon>Metazoa</taxon>
        <taxon>Chordata</taxon>
        <taxon>Craniata</taxon>
        <taxon>Vertebrata</taxon>
        <taxon>Euteleostomi</taxon>
        <taxon>Mammalia</taxon>
        <taxon>Eutheria</taxon>
        <taxon>Euarchontoglires</taxon>
        <taxon>Primates</taxon>
        <taxon>Haplorrhini</taxon>
        <taxon>Catarrhini</taxon>
        <taxon>Hominidae</taxon>
        <taxon>Pongo</taxon>
    </lineage>
</organism>